<organism>
    <name type="scientific">Proteus vulgaris</name>
    <dbReference type="NCBI Taxonomy" id="585"/>
    <lineage>
        <taxon>Bacteria</taxon>
        <taxon>Pseudomonadati</taxon>
        <taxon>Pseudomonadota</taxon>
        <taxon>Gammaproteobacteria</taxon>
        <taxon>Enterobacterales</taxon>
        <taxon>Morganellaceae</taxon>
        <taxon>Proteus</taxon>
    </lineage>
</organism>
<protein>
    <recommendedName>
        <fullName>Frd operon probable iron-sulfur subunit A</fullName>
    </recommendedName>
</protein>
<accession>P20925</accession>
<evidence type="ECO:0000250" key="1"/>
<evidence type="ECO:0000255" key="2">
    <source>
        <dbReference type="PROSITE-ProRule" id="PRU00711"/>
    </source>
</evidence>
<name>YFRA_PROVU</name>
<reference key="1">
    <citation type="journal article" date="1987" name="Eur. J. Biochem.">
        <title>Nucleotide sequence and comparative analysis of the frd operon encoding the fumarate reductase of Proteus vulgaris. Extensive sequence divergence of the membrane anchors and absence of an frd-linked ampC cephalosporinase gene.</title>
        <authorList>
            <person name="Cole S.T."/>
        </authorList>
    </citation>
    <scope>NUCLEOTIDE SEQUENCE [GENOMIC DNA]</scope>
</reference>
<sequence length="157" mass="17317">ASHANLAIDQISEQNFQPRIHVVKGFSISTAVVCHQCEDAPCANVCPNGAIIHNKDYYYVDQDKCIGCKTCVLACPYGTMEVVSRPVMRKLTALNTIEAFKAEANKCDLCHHRAEGPACVEVCPTQALVCIDRDALEDMVKERRRKAAFETGADLLF</sequence>
<feature type="chain" id="PRO_0000158707" description="Frd operon probable iron-sulfur subunit A">
    <location>
        <begin position="1" status="less than"/>
        <end position="157"/>
    </location>
</feature>
<feature type="domain" description="4Fe-4S ferredoxin-type 1" evidence="2">
    <location>
        <begin position="24"/>
        <end position="55"/>
    </location>
</feature>
<feature type="domain" description="4Fe-4S ferredoxin-type 2" evidence="2">
    <location>
        <begin position="56"/>
        <end position="85"/>
    </location>
</feature>
<feature type="domain" description="4Fe-4S ferredoxin-type 3" evidence="2">
    <location>
        <begin position="100"/>
        <end position="133"/>
    </location>
</feature>
<feature type="binding site" evidence="1">
    <location>
        <position position="34"/>
    </location>
    <ligand>
        <name>[4Fe-4S] cluster</name>
        <dbReference type="ChEBI" id="CHEBI:49883"/>
        <label>3</label>
    </ligand>
</feature>
<feature type="binding site" evidence="1">
    <location>
        <position position="37"/>
    </location>
    <ligand>
        <name>[4Fe-4S] cluster</name>
        <dbReference type="ChEBI" id="CHEBI:49883"/>
        <label>3</label>
    </ligand>
</feature>
<feature type="binding site" evidence="1">
    <location>
        <position position="42"/>
    </location>
    <ligand>
        <name>[4Fe-4S] cluster</name>
        <dbReference type="ChEBI" id="CHEBI:49883"/>
        <label>3</label>
    </ligand>
</feature>
<feature type="binding site" evidence="1">
    <location>
        <position position="46"/>
    </location>
    <ligand>
        <name>[4Fe-4S] cluster</name>
        <dbReference type="ChEBI" id="CHEBI:49883"/>
        <label>4</label>
    </ligand>
</feature>
<feature type="binding site" evidence="1">
    <location>
        <position position="65"/>
    </location>
    <ligand>
        <name>[4Fe-4S] cluster</name>
        <dbReference type="ChEBI" id="CHEBI:49883"/>
        <label>4</label>
    </ligand>
</feature>
<feature type="binding site" evidence="1">
    <location>
        <position position="68"/>
    </location>
    <ligand>
        <name>[4Fe-4S] cluster</name>
        <dbReference type="ChEBI" id="CHEBI:49883"/>
        <label>4</label>
    </ligand>
</feature>
<feature type="binding site" evidence="1">
    <location>
        <position position="71"/>
    </location>
    <ligand>
        <name>[4Fe-4S] cluster</name>
        <dbReference type="ChEBI" id="CHEBI:49883"/>
        <label>4</label>
    </ligand>
</feature>
<feature type="binding site" evidence="1">
    <location>
        <position position="75"/>
    </location>
    <ligand>
        <name>[4Fe-4S] cluster</name>
        <dbReference type="ChEBI" id="CHEBI:49883"/>
        <label>3</label>
    </ligand>
</feature>
<feature type="binding site" evidence="1">
    <location>
        <position position="107"/>
    </location>
    <ligand>
        <name>[4Fe-4S] cluster</name>
        <dbReference type="ChEBI" id="CHEBI:49883"/>
        <label>2</label>
    </ligand>
</feature>
<feature type="binding site" evidence="1">
    <location>
        <position position="110"/>
    </location>
    <ligand>
        <name>[4Fe-4S] cluster</name>
        <dbReference type="ChEBI" id="CHEBI:49883"/>
        <label>2</label>
    </ligand>
</feature>
<feature type="binding site" evidence="1">
    <location>
        <position position="119"/>
    </location>
    <ligand>
        <name>[4Fe-4S] cluster</name>
        <dbReference type="ChEBI" id="CHEBI:49883"/>
        <label>2</label>
    </ligand>
</feature>
<feature type="binding site" evidence="1">
    <location>
        <position position="123"/>
    </location>
    <ligand>
        <name>[4Fe-4S] cluster</name>
        <dbReference type="ChEBI" id="CHEBI:49883"/>
        <label>1</label>
    </ligand>
</feature>
<feature type="non-terminal residue">
    <location>
        <position position="1"/>
    </location>
</feature>
<dbReference type="EMBL" id="X06151">
    <property type="protein sequence ID" value="CAA29509.1"/>
    <property type="molecule type" value="Genomic_DNA"/>
</dbReference>
<dbReference type="PIR" id="S00117">
    <property type="entry name" value="S00117"/>
</dbReference>
<dbReference type="SMR" id="P20925"/>
<dbReference type="STRING" id="585.DR95_2065"/>
<dbReference type="eggNOG" id="COG1142">
    <property type="taxonomic scope" value="Bacteria"/>
</dbReference>
<dbReference type="GO" id="GO:0051539">
    <property type="term" value="F:4 iron, 4 sulfur cluster binding"/>
    <property type="evidence" value="ECO:0007669"/>
    <property type="project" value="UniProtKB-KW"/>
</dbReference>
<dbReference type="GO" id="GO:0046872">
    <property type="term" value="F:metal ion binding"/>
    <property type="evidence" value="ECO:0007669"/>
    <property type="project" value="UniProtKB-KW"/>
</dbReference>
<dbReference type="CDD" id="cd10554">
    <property type="entry name" value="HycB_like"/>
    <property type="match status" value="1"/>
</dbReference>
<dbReference type="Gene3D" id="3.30.70.20">
    <property type="match status" value="1"/>
</dbReference>
<dbReference type="InterPro" id="IPR017896">
    <property type="entry name" value="4Fe4S_Fe-S-bd"/>
</dbReference>
<dbReference type="InterPro" id="IPR017900">
    <property type="entry name" value="4Fe4S_Fe_S_CS"/>
</dbReference>
<dbReference type="InterPro" id="IPR050294">
    <property type="entry name" value="RnfB_subfamily"/>
</dbReference>
<dbReference type="PANTHER" id="PTHR42859:SF17">
    <property type="entry name" value="ELECTRON TRANSPORT PROTEIN HYDN-RELATED"/>
    <property type="match status" value="1"/>
</dbReference>
<dbReference type="PANTHER" id="PTHR42859">
    <property type="entry name" value="OXIDOREDUCTASE"/>
    <property type="match status" value="1"/>
</dbReference>
<dbReference type="Pfam" id="PF00037">
    <property type="entry name" value="Fer4"/>
    <property type="match status" value="1"/>
</dbReference>
<dbReference type="SUPFAM" id="SSF54862">
    <property type="entry name" value="4Fe-4S ferredoxins"/>
    <property type="match status" value="1"/>
</dbReference>
<dbReference type="PROSITE" id="PS00198">
    <property type="entry name" value="4FE4S_FER_1"/>
    <property type="match status" value="1"/>
</dbReference>
<dbReference type="PROSITE" id="PS51379">
    <property type="entry name" value="4FE4S_FER_2"/>
    <property type="match status" value="3"/>
</dbReference>
<proteinExistence type="predicted"/>
<keyword id="KW-0004">4Fe-4S</keyword>
<keyword id="KW-0408">Iron</keyword>
<keyword id="KW-0411">Iron-sulfur</keyword>
<keyword id="KW-0479">Metal-binding</keyword>
<keyword id="KW-0677">Repeat</keyword>